<evidence type="ECO:0000255" key="1">
    <source>
        <dbReference type="HAMAP-Rule" id="MF_00031"/>
    </source>
</evidence>
<evidence type="ECO:0000269" key="2">
    <source>
    </source>
</evidence>
<evidence type="ECO:0000303" key="3">
    <source ref="1"/>
</evidence>
<evidence type="ECO:0000305" key="4">
    <source>
    </source>
</evidence>
<evidence type="ECO:0007744" key="5">
    <source>
        <dbReference type="PDB" id="7OA5"/>
    </source>
</evidence>
<evidence type="ECO:0007829" key="6">
    <source>
        <dbReference type="PDB" id="7OA5"/>
    </source>
</evidence>
<proteinExistence type="evidence at protein level"/>
<gene>
    <name evidence="1 3" type="primary">ruvA</name>
    <name type="ordered locus">ML0482</name>
    <name type="ORF">B1177_C2_188</name>
</gene>
<protein>
    <recommendedName>
        <fullName evidence="1">Holliday junction branch migration complex subunit RuvA</fullName>
    </recommendedName>
</protein>
<feature type="chain" id="PRO_0000094649" description="Holliday junction branch migration complex subunit RuvA">
    <location>
        <begin position="1"/>
        <end position="203"/>
    </location>
</feature>
<feature type="region of interest" description="Domain I" evidence="2">
    <location>
        <begin position="1"/>
        <end position="65"/>
    </location>
</feature>
<feature type="region of interest" description="Domain II" evidence="2">
    <location>
        <begin position="66"/>
        <end position="132"/>
    </location>
</feature>
<feature type="region of interest" description="Flexible linker" evidence="2">
    <location>
        <begin position="133"/>
        <end position="147"/>
    </location>
</feature>
<feature type="region of interest" description="Domain III" evidence="2">
    <location>
        <begin position="148"/>
        <end position="196"/>
    </location>
</feature>
<feature type="short sequence motif" description="Acidic pin" evidence="4">
    <location>
        <begin position="54"/>
        <end position="55"/>
    </location>
</feature>
<feature type="binding site" evidence="2">
    <location>
        <begin position="79"/>
        <end position="80"/>
    </location>
    <ligand>
        <name>DNA</name>
        <dbReference type="ChEBI" id="CHEBI:16991"/>
    </ligand>
</feature>
<feature type="binding site" evidence="2">
    <location>
        <position position="83"/>
    </location>
    <ligand>
        <name>DNA</name>
        <dbReference type="ChEBI" id="CHEBI:16991"/>
    </ligand>
</feature>
<feature type="binding site" evidence="2">
    <location>
        <begin position="114"/>
        <end position="116"/>
    </location>
    <ligand>
        <name>DNA</name>
        <dbReference type="ChEBI" id="CHEBI:16991"/>
    </ligand>
</feature>
<feature type="binding site" evidence="2">
    <location>
        <position position="118"/>
    </location>
    <ligand>
        <name>DNA</name>
        <dbReference type="ChEBI" id="CHEBI:16991"/>
    </ligand>
</feature>
<feature type="strand" evidence="6">
    <location>
        <begin position="2"/>
        <end position="5"/>
    </location>
</feature>
<feature type="strand" evidence="6">
    <location>
        <begin position="7"/>
        <end position="12"/>
    </location>
</feature>
<feature type="strand" evidence="6">
    <location>
        <begin position="17"/>
        <end position="21"/>
    </location>
</feature>
<feature type="strand" evidence="6">
    <location>
        <begin position="24"/>
        <end position="26"/>
    </location>
</feature>
<feature type="helix" evidence="6">
    <location>
        <begin position="32"/>
        <end position="35"/>
    </location>
</feature>
<feature type="strand" evidence="6">
    <location>
        <begin position="48"/>
        <end position="53"/>
    </location>
</feature>
<feature type="strand" evidence="6">
    <location>
        <begin position="56"/>
        <end position="61"/>
    </location>
</feature>
<feature type="helix" evidence="6">
    <location>
        <begin position="65"/>
        <end position="75"/>
    </location>
</feature>
<feature type="strand" evidence="6">
    <location>
        <begin position="77"/>
        <end position="79"/>
    </location>
</feature>
<feature type="helix" evidence="6">
    <location>
        <begin position="82"/>
        <end position="91"/>
    </location>
</feature>
<feature type="helix" evidence="6">
    <location>
        <begin position="94"/>
        <end position="100"/>
    </location>
</feature>
<feature type="turn" evidence="6">
    <location>
        <begin position="101"/>
        <end position="104"/>
    </location>
</feature>
<feature type="helix" evidence="6">
    <location>
        <begin position="106"/>
        <end position="110"/>
    </location>
</feature>
<feature type="helix" evidence="6">
    <location>
        <begin position="117"/>
        <end position="126"/>
    </location>
</feature>
<feature type="helix" evidence="6">
    <location>
        <begin position="129"/>
        <end position="131"/>
    </location>
</feature>
<feature type="helix" evidence="6">
    <location>
        <begin position="150"/>
        <end position="153"/>
    </location>
</feature>
<feature type="helix" evidence="6">
    <location>
        <begin position="156"/>
        <end position="161"/>
    </location>
</feature>
<feature type="helix" evidence="6">
    <location>
        <begin position="165"/>
        <end position="177"/>
    </location>
</feature>
<feature type="helix" evidence="6">
    <location>
        <begin position="188"/>
        <end position="193"/>
    </location>
</feature>
<feature type="turn" evidence="6">
    <location>
        <begin position="197"/>
        <end position="199"/>
    </location>
</feature>
<reference key="1">
    <citation type="submission" date="1994-03" db="EMBL/GenBank/DDBJ databases">
        <authorList>
            <person name="Smith D.R."/>
            <person name="Robison K."/>
        </authorList>
    </citation>
    <scope>NUCLEOTIDE SEQUENCE [GENOMIC DNA]</scope>
</reference>
<reference key="2">
    <citation type="journal article" date="2001" name="Nature">
        <title>Massive gene decay in the leprosy bacillus.</title>
        <authorList>
            <person name="Cole S.T."/>
            <person name="Eiglmeier K."/>
            <person name="Parkhill J."/>
            <person name="James K.D."/>
            <person name="Thomson N.R."/>
            <person name="Wheeler P.R."/>
            <person name="Honore N."/>
            <person name="Garnier T."/>
            <person name="Churcher C.M."/>
            <person name="Harris D.E."/>
            <person name="Mungall K.L."/>
            <person name="Basham D."/>
            <person name="Brown D."/>
            <person name="Chillingworth T."/>
            <person name="Connor R."/>
            <person name="Davies R.M."/>
            <person name="Devlin K."/>
            <person name="Duthoy S."/>
            <person name="Feltwell T."/>
            <person name="Fraser A."/>
            <person name="Hamlin N."/>
            <person name="Holroyd S."/>
            <person name="Hornsby T."/>
            <person name="Jagels K."/>
            <person name="Lacroix C."/>
            <person name="Maclean J."/>
            <person name="Moule S."/>
            <person name="Murphy L.D."/>
            <person name="Oliver K."/>
            <person name="Quail M.A."/>
            <person name="Rajandream M.A."/>
            <person name="Rutherford K.M."/>
            <person name="Rutter S."/>
            <person name="Seeger K."/>
            <person name="Simon S."/>
            <person name="Simmonds M."/>
            <person name="Skelton J."/>
            <person name="Squares R."/>
            <person name="Squares S."/>
            <person name="Stevens K."/>
            <person name="Taylor K."/>
            <person name="Whitehead S."/>
            <person name="Woodward J.R."/>
            <person name="Barrell B.G."/>
        </authorList>
    </citation>
    <scope>NUCLEOTIDE SEQUENCE [LARGE SCALE GENOMIC DNA]</scope>
    <source>
        <strain>TN</strain>
    </source>
</reference>
<reference evidence="5" key="3">
    <citation type="journal article" date="1998" name="Mol. Cell">
        <title>Crystal structure of an octameric RuvA-Holliday junction complex.</title>
        <authorList>
            <person name="Roe S.M."/>
            <person name="Barlow T."/>
            <person name="Brown T."/>
            <person name="Oram M."/>
            <person name="Keeley A."/>
            <person name="Tsaneva I.R."/>
            <person name="Pearl L.H."/>
        </authorList>
    </citation>
    <scope>X-RAY CRYSTALLOGRAPHY (3.0 ANGSTROMS) IN COMPLEX WITH DNA</scope>
    <scope>SUBUNIT</scope>
    <scope>DOMAIN</scope>
    <scope>DNA-BINDING</scope>
</reference>
<comment type="function">
    <text evidence="1">The RuvA-RuvB-RuvC complex processes Holliday junction (HJ) DNA during genetic recombination and DNA repair, while the RuvA-RuvB complex plays an important role in the rescue of blocked DNA replication forks via replication fork reversal (RFR). RuvA specifically binds to HJ cruciform DNA, conferring on it an open structure. The RuvB hexamer acts as an ATP-dependent pump, pulling dsDNA into and through the RuvAB complex. HJ branch migration allows RuvC to scan DNA until it finds its consensus sequence, where it cleaves and resolves the cruciform DNA.</text>
</comment>
<comment type="subunit">
    <text evidence="1 2">Homotetramer, forms a dimer of homotetramers around Holliday junction DNA. The tetramers make direct protein-protein contact, DNA contacts both tetramers (PubMed:9774974). Forms a complex with RuvB (PubMed:9774974). Forms an RuvA(8)-RuvB(12)-Holliday junction (HJ) complex. HJ DNA is sandwiched between 2 RuvA tetramers; dsDNA enters through RuvA and exits via RuvB. An RuvB hexamer assembles on each DNA strand where it exits the tetramer. Each RuvB hexamer is contacted by two RuvA subunits (via domain III) on 2 adjacent RuvB subunits; this complex drives branch migration. In the full resolvosome a probable DNA-RuvA(4)-RuvB(12)-RuvC(2) complex forms which resolves the HJ.</text>
</comment>
<comment type="subcellular location">
    <subcellularLocation>
        <location evidence="1">Cytoplasm</location>
    </subcellularLocation>
</comment>
<comment type="domain">
    <text evidence="1 2">Has three domains with a flexible linker between the domains II and III and assumes an 'L' shape (PubMed:9774974). Domain III is highly mobile and contacts RuvB.</text>
</comment>
<comment type="similarity">
    <text evidence="1">Belongs to the RuvA family.</text>
</comment>
<dbReference type="EMBL" id="U00011">
    <property type="protein sequence ID" value="AAA17095.1"/>
    <property type="molecule type" value="Genomic_DNA"/>
</dbReference>
<dbReference type="EMBL" id="AL583918">
    <property type="protein sequence ID" value="CAC29990.1"/>
    <property type="molecule type" value="Genomic_DNA"/>
</dbReference>
<dbReference type="PIR" id="S72731">
    <property type="entry name" value="S72731"/>
</dbReference>
<dbReference type="RefSeq" id="NP_301422.1">
    <property type="nucleotide sequence ID" value="NC_002677.1"/>
</dbReference>
<dbReference type="RefSeq" id="WP_010907746.1">
    <property type="nucleotide sequence ID" value="NC_002677.1"/>
</dbReference>
<dbReference type="PDB" id="7OA5">
    <property type="method" value="X-ray"/>
    <property type="resolution" value="2.38 A"/>
    <property type="chains" value="A/B/C/D/E/F/G/H=1-203"/>
</dbReference>
<dbReference type="PDBsum" id="7OA5"/>
<dbReference type="SMR" id="P40832"/>
<dbReference type="STRING" id="272631.gene:17574303"/>
<dbReference type="KEGG" id="mle:ML0482"/>
<dbReference type="PATRIC" id="fig|272631.5.peg.845"/>
<dbReference type="Leproma" id="ML0482"/>
<dbReference type="eggNOG" id="COG0632">
    <property type="taxonomic scope" value="Bacteria"/>
</dbReference>
<dbReference type="HOGENOM" id="CLU_087936_2_1_11"/>
<dbReference type="OrthoDB" id="5293449at2"/>
<dbReference type="Proteomes" id="UP000000806">
    <property type="component" value="Chromosome"/>
</dbReference>
<dbReference type="GO" id="GO:0005737">
    <property type="term" value="C:cytoplasm"/>
    <property type="evidence" value="ECO:0007669"/>
    <property type="project" value="UniProtKB-SubCell"/>
</dbReference>
<dbReference type="GO" id="GO:0009379">
    <property type="term" value="C:Holliday junction helicase complex"/>
    <property type="evidence" value="ECO:0007669"/>
    <property type="project" value="InterPro"/>
</dbReference>
<dbReference type="GO" id="GO:0048476">
    <property type="term" value="C:Holliday junction resolvase complex"/>
    <property type="evidence" value="ECO:0007669"/>
    <property type="project" value="UniProtKB-UniRule"/>
</dbReference>
<dbReference type="GO" id="GO:0005524">
    <property type="term" value="F:ATP binding"/>
    <property type="evidence" value="ECO:0007669"/>
    <property type="project" value="InterPro"/>
</dbReference>
<dbReference type="GO" id="GO:0000400">
    <property type="term" value="F:four-way junction DNA binding"/>
    <property type="evidence" value="ECO:0007669"/>
    <property type="project" value="UniProtKB-UniRule"/>
</dbReference>
<dbReference type="GO" id="GO:0009378">
    <property type="term" value="F:four-way junction helicase activity"/>
    <property type="evidence" value="ECO:0007669"/>
    <property type="project" value="InterPro"/>
</dbReference>
<dbReference type="GO" id="GO:0006310">
    <property type="term" value="P:DNA recombination"/>
    <property type="evidence" value="ECO:0007669"/>
    <property type="project" value="UniProtKB-UniRule"/>
</dbReference>
<dbReference type="GO" id="GO:0006281">
    <property type="term" value="P:DNA repair"/>
    <property type="evidence" value="ECO:0007669"/>
    <property type="project" value="UniProtKB-UniRule"/>
</dbReference>
<dbReference type="CDD" id="cd14332">
    <property type="entry name" value="UBA_RuvA_C"/>
    <property type="match status" value="1"/>
</dbReference>
<dbReference type="FunFam" id="2.40.50.140:FF:000083">
    <property type="entry name" value="Holliday junction ATP-dependent DNA helicase RuvA"/>
    <property type="match status" value="1"/>
</dbReference>
<dbReference type="Gene3D" id="1.10.150.20">
    <property type="entry name" value="5' to 3' exonuclease, C-terminal subdomain"/>
    <property type="match status" value="1"/>
</dbReference>
<dbReference type="Gene3D" id="1.10.8.10">
    <property type="entry name" value="DNA helicase RuvA subunit, C-terminal domain"/>
    <property type="match status" value="1"/>
</dbReference>
<dbReference type="Gene3D" id="2.40.50.140">
    <property type="entry name" value="Nucleic acid-binding proteins"/>
    <property type="match status" value="1"/>
</dbReference>
<dbReference type="HAMAP" id="MF_00031">
    <property type="entry name" value="DNA_HJ_migration_RuvA"/>
    <property type="match status" value="1"/>
</dbReference>
<dbReference type="InterPro" id="IPR013849">
    <property type="entry name" value="DNA_helicase_Holl-junc_RuvA_I"/>
</dbReference>
<dbReference type="InterPro" id="IPR003583">
    <property type="entry name" value="Hlx-hairpin-Hlx_DNA-bd_motif"/>
</dbReference>
<dbReference type="InterPro" id="IPR012340">
    <property type="entry name" value="NA-bd_OB-fold"/>
</dbReference>
<dbReference type="InterPro" id="IPR000085">
    <property type="entry name" value="RuvA"/>
</dbReference>
<dbReference type="InterPro" id="IPR010994">
    <property type="entry name" value="RuvA_2-like"/>
</dbReference>
<dbReference type="InterPro" id="IPR011114">
    <property type="entry name" value="RuvA_C"/>
</dbReference>
<dbReference type="InterPro" id="IPR036267">
    <property type="entry name" value="RuvA_C_sf"/>
</dbReference>
<dbReference type="NCBIfam" id="TIGR00084">
    <property type="entry name" value="ruvA"/>
    <property type="match status" value="1"/>
</dbReference>
<dbReference type="Pfam" id="PF14520">
    <property type="entry name" value="HHH_5"/>
    <property type="match status" value="1"/>
</dbReference>
<dbReference type="Pfam" id="PF07499">
    <property type="entry name" value="RuvA_C"/>
    <property type="match status" value="1"/>
</dbReference>
<dbReference type="Pfam" id="PF01330">
    <property type="entry name" value="RuvA_N"/>
    <property type="match status" value="1"/>
</dbReference>
<dbReference type="SMART" id="SM00278">
    <property type="entry name" value="HhH1"/>
    <property type="match status" value="2"/>
</dbReference>
<dbReference type="SUPFAM" id="SSF46929">
    <property type="entry name" value="DNA helicase RuvA subunit, C-terminal domain"/>
    <property type="match status" value="1"/>
</dbReference>
<dbReference type="SUPFAM" id="SSF50249">
    <property type="entry name" value="Nucleic acid-binding proteins"/>
    <property type="match status" value="1"/>
</dbReference>
<dbReference type="SUPFAM" id="SSF47781">
    <property type="entry name" value="RuvA domain 2-like"/>
    <property type="match status" value="1"/>
</dbReference>
<name>RUVA_MYCLE</name>
<keyword id="KW-0002">3D-structure</keyword>
<keyword id="KW-0963">Cytoplasm</keyword>
<keyword id="KW-0227">DNA damage</keyword>
<keyword id="KW-0233">DNA recombination</keyword>
<keyword id="KW-0234">DNA repair</keyword>
<keyword id="KW-0238">DNA-binding</keyword>
<keyword id="KW-1185">Reference proteome</keyword>
<sequence length="203" mass="20751">MIFSVRGEVLEVALDHAVIEAAGIGYRVNATPSALATLRQGSQARLVTAMVVREDSMTLYGFSDAENRDLFLALLSVSGVGPRLAMATLAVHDAAALRQALADSDVASLTRVPGIGKRGAERIVLELRDKVGPVGASGLTVGTAADGNAVRGSVVEALVGLGFAAKQAEEATDQVLDGELGKDGAVATSSALRAALSLLGKTR</sequence>
<accession>P40832</accession>
<organism>
    <name type="scientific">Mycobacterium leprae (strain TN)</name>
    <dbReference type="NCBI Taxonomy" id="272631"/>
    <lineage>
        <taxon>Bacteria</taxon>
        <taxon>Bacillati</taxon>
        <taxon>Actinomycetota</taxon>
        <taxon>Actinomycetes</taxon>
        <taxon>Mycobacteriales</taxon>
        <taxon>Mycobacteriaceae</taxon>
        <taxon>Mycobacterium</taxon>
    </lineage>
</organism>